<name>VG103_BPPF1</name>
<reference key="1">
    <citation type="journal article" date="1991" name="J. Mol. Biol.">
        <title>DNA sequence of the filamentous bacteriophage Pf1.</title>
        <authorList>
            <person name="Hill D.F."/>
            <person name="Short N.J."/>
            <person name="Perham R.N."/>
            <person name="Petersen G.B."/>
        </authorList>
    </citation>
    <scope>NUCLEOTIDE SEQUENCE [GENOMIC DNA]</scope>
    <source>
        <strain>ATCC 25102-B1 / pf</strain>
    </source>
</reference>
<feature type="chain" id="PRO_0000098219" description="11.2 kDa protein">
    <location>
        <begin position="1"/>
        <end position="103"/>
    </location>
</feature>
<organism>
    <name type="scientific">Pseudomonas phage Pf1</name>
    <name type="common">Bacteriophage Pf1</name>
    <dbReference type="NCBI Taxonomy" id="2011081"/>
    <lineage>
        <taxon>Viruses</taxon>
        <taxon>Monodnaviria</taxon>
        <taxon>Loebvirae</taxon>
        <taxon>Hofneiviricota</taxon>
        <taxon>Faserviricetes</taxon>
        <taxon>Tubulavirales</taxon>
        <taxon>Inoviridae</taxon>
        <taxon>Primolicivirus</taxon>
    </lineage>
</organism>
<keyword id="KW-1185">Reference proteome</keyword>
<dbReference type="EMBL" id="X52107">
    <property type="protein sequence ID" value="CAA36339.1"/>
    <property type="molecule type" value="Genomic_DNA"/>
</dbReference>
<dbReference type="PIR" id="S15151">
    <property type="entry name" value="S15151"/>
</dbReference>
<dbReference type="RefSeq" id="NP_039611.1">
    <property type="nucleotide sequence ID" value="NC_001331.1"/>
</dbReference>
<dbReference type="GeneID" id="1260704"/>
<dbReference type="KEGG" id="vg:1260704"/>
<dbReference type="Proteomes" id="UP000002121">
    <property type="component" value="Genome"/>
</dbReference>
<protein>
    <recommendedName>
        <fullName>11.2 kDa protein</fullName>
    </recommendedName>
    <alternativeName>
        <fullName>ORF 103</fullName>
    </alternativeName>
</protein>
<sequence>MNHGRQSLLPTPNPRPGLRLLCVLVRKAGHPIAQPVAVSGLPAPWAALSGRWPLALPSPFLLRETRPVPASAEVLARCVRQRETHALCARARRLPTGGLTHAR</sequence>
<accession>P25133</accession>
<organismHost>
    <name type="scientific">Pseudomonas aeruginosa</name>
    <dbReference type="NCBI Taxonomy" id="287"/>
</organismHost>
<proteinExistence type="predicted"/>